<reference key="1">
    <citation type="submission" date="2007-07" db="EMBL/GenBank/DDBJ databases">
        <title>Complete sequence of Fervidobacterium nodosum Rt17-B1.</title>
        <authorList>
            <consortium name="US DOE Joint Genome Institute"/>
            <person name="Copeland A."/>
            <person name="Lucas S."/>
            <person name="Lapidus A."/>
            <person name="Barry K."/>
            <person name="Glavina del Rio T."/>
            <person name="Dalin E."/>
            <person name="Tice H."/>
            <person name="Pitluck S."/>
            <person name="Saunders E."/>
            <person name="Brettin T."/>
            <person name="Bruce D."/>
            <person name="Detter J.C."/>
            <person name="Han C."/>
            <person name="Schmutz J."/>
            <person name="Larimer F."/>
            <person name="Land M."/>
            <person name="Hauser L."/>
            <person name="Kyrpides N."/>
            <person name="Mikhailova N."/>
            <person name="Nelson K."/>
            <person name="Gogarten J.P."/>
            <person name="Noll K."/>
            <person name="Richardson P."/>
        </authorList>
    </citation>
    <scope>NUCLEOTIDE SEQUENCE [LARGE SCALE GENOMIC DNA]</scope>
    <source>
        <strain>ATCC 35602 / DSM 5306 / Rt17-B1</strain>
    </source>
</reference>
<keyword id="KW-0488">Methylation</keyword>
<keyword id="KW-1185">Reference proteome</keyword>
<keyword id="KW-0687">Ribonucleoprotein</keyword>
<keyword id="KW-0689">Ribosomal protein</keyword>
<keyword id="KW-0694">RNA-binding</keyword>
<keyword id="KW-0699">rRNA-binding</keyword>
<name>RL11_FERNB</name>
<sequence>MAKKVVAQVRLVLEAGKATPAPPVGPALGQRGVNLMEFCKKFNAVTADKAGLLIPVIVTVYDDRSFTFITKTPPASFLLKRAAKINSGSSEPKRKVAGKVTRQQIKEIAELKMQDLNANDLEAAMKIIEGTARSMGLEVVD</sequence>
<organism>
    <name type="scientific">Fervidobacterium nodosum (strain ATCC 35602 / DSM 5306 / Rt17-B1)</name>
    <dbReference type="NCBI Taxonomy" id="381764"/>
    <lineage>
        <taxon>Bacteria</taxon>
        <taxon>Thermotogati</taxon>
        <taxon>Thermotogota</taxon>
        <taxon>Thermotogae</taxon>
        <taxon>Thermotogales</taxon>
        <taxon>Fervidobacteriaceae</taxon>
        <taxon>Fervidobacterium</taxon>
    </lineage>
</organism>
<protein>
    <recommendedName>
        <fullName evidence="1">Large ribosomal subunit protein uL11</fullName>
    </recommendedName>
    <alternativeName>
        <fullName evidence="2">50S ribosomal protein L11</fullName>
    </alternativeName>
</protein>
<proteinExistence type="inferred from homology"/>
<feature type="chain" id="PRO_1000072801" description="Large ribosomal subunit protein uL11">
    <location>
        <begin position="1"/>
        <end position="141"/>
    </location>
</feature>
<gene>
    <name evidence="1" type="primary">rplK</name>
    <name type="ordered locus">Fnod_0847</name>
</gene>
<evidence type="ECO:0000255" key="1">
    <source>
        <dbReference type="HAMAP-Rule" id="MF_00736"/>
    </source>
</evidence>
<evidence type="ECO:0000305" key="2"/>
<dbReference type="EMBL" id="CP000771">
    <property type="protein sequence ID" value="ABS60700.1"/>
    <property type="molecule type" value="Genomic_DNA"/>
</dbReference>
<dbReference type="RefSeq" id="WP_011994016.1">
    <property type="nucleotide sequence ID" value="NC_009718.1"/>
</dbReference>
<dbReference type="SMR" id="A7HLB7"/>
<dbReference type="STRING" id="381764.Fnod_0847"/>
<dbReference type="KEGG" id="fno:Fnod_0847"/>
<dbReference type="eggNOG" id="COG0080">
    <property type="taxonomic scope" value="Bacteria"/>
</dbReference>
<dbReference type="HOGENOM" id="CLU_074237_2_1_0"/>
<dbReference type="OrthoDB" id="9802408at2"/>
<dbReference type="Proteomes" id="UP000002415">
    <property type="component" value="Chromosome"/>
</dbReference>
<dbReference type="GO" id="GO:0022625">
    <property type="term" value="C:cytosolic large ribosomal subunit"/>
    <property type="evidence" value="ECO:0007669"/>
    <property type="project" value="TreeGrafter"/>
</dbReference>
<dbReference type="GO" id="GO:0070180">
    <property type="term" value="F:large ribosomal subunit rRNA binding"/>
    <property type="evidence" value="ECO:0007669"/>
    <property type="project" value="UniProtKB-UniRule"/>
</dbReference>
<dbReference type="GO" id="GO:0003735">
    <property type="term" value="F:structural constituent of ribosome"/>
    <property type="evidence" value="ECO:0007669"/>
    <property type="project" value="InterPro"/>
</dbReference>
<dbReference type="GO" id="GO:0006412">
    <property type="term" value="P:translation"/>
    <property type="evidence" value="ECO:0007669"/>
    <property type="project" value="UniProtKB-UniRule"/>
</dbReference>
<dbReference type="CDD" id="cd00349">
    <property type="entry name" value="Ribosomal_L11"/>
    <property type="match status" value="1"/>
</dbReference>
<dbReference type="FunFam" id="1.10.10.250:FF:000001">
    <property type="entry name" value="50S ribosomal protein L11"/>
    <property type="match status" value="1"/>
</dbReference>
<dbReference type="FunFam" id="3.30.1550.10:FF:000001">
    <property type="entry name" value="50S ribosomal protein L11"/>
    <property type="match status" value="1"/>
</dbReference>
<dbReference type="Gene3D" id="1.10.10.250">
    <property type="entry name" value="Ribosomal protein L11, C-terminal domain"/>
    <property type="match status" value="1"/>
</dbReference>
<dbReference type="Gene3D" id="3.30.1550.10">
    <property type="entry name" value="Ribosomal protein L11/L12, N-terminal domain"/>
    <property type="match status" value="1"/>
</dbReference>
<dbReference type="HAMAP" id="MF_00736">
    <property type="entry name" value="Ribosomal_uL11"/>
    <property type="match status" value="1"/>
</dbReference>
<dbReference type="InterPro" id="IPR000911">
    <property type="entry name" value="Ribosomal_uL11"/>
</dbReference>
<dbReference type="InterPro" id="IPR006519">
    <property type="entry name" value="Ribosomal_uL11_bac-typ"/>
</dbReference>
<dbReference type="InterPro" id="IPR020783">
    <property type="entry name" value="Ribosomal_uL11_C"/>
</dbReference>
<dbReference type="InterPro" id="IPR036769">
    <property type="entry name" value="Ribosomal_uL11_C_sf"/>
</dbReference>
<dbReference type="InterPro" id="IPR020785">
    <property type="entry name" value="Ribosomal_uL11_CS"/>
</dbReference>
<dbReference type="InterPro" id="IPR020784">
    <property type="entry name" value="Ribosomal_uL11_N"/>
</dbReference>
<dbReference type="InterPro" id="IPR036796">
    <property type="entry name" value="Ribosomal_uL11_N_sf"/>
</dbReference>
<dbReference type="NCBIfam" id="TIGR01632">
    <property type="entry name" value="L11_bact"/>
    <property type="match status" value="1"/>
</dbReference>
<dbReference type="PANTHER" id="PTHR11661">
    <property type="entry name" value="60S RIBOSOMAL PROTEIN L12"/>
    <property type="match status" value="1"/>
</dbReference>
<dbReference type="PANTHER" id="PTHR11661:SF1">
    <property type="entry name" value="LARGE RIBOSOMAL SUBUNIT PROTEIN UL11M"/>
    <property type="match status" value="1"/>
</dbReference>
<dbReference type="Pfam" id="PF00298">
    <property type="entry name" value="Ribosomal_L11"/>
    <property type="match status" value="1"/>
</dbReference>
<dbReference type="Pfam" id="PF03946">
    <property type="entry name" value="Ribosomal_L11_N"/>
    <property type="match status" value="1"/>
</dbReference>
<dbReference type="SMART" id="SM00649">
    <property type="entry name" value="RL11"/>
    <property type="match status" value="1"/>
</dbReference>
<dbReference type="SUPFAM" id="SSF54747">
    <property type="entry name" value="Ribosomal L11/L12e N-terminal domain"/>
    <property type="match status" value="1"/>
</dbReference>
<dbReference type="SUPFAM" id="SSF46906">
    <property type="entry name" value="Ribosomal protein L11, C-terminal domain"/>
    <property type="match status" value="1"/>
</dbReference>
<dbReference type="PROSITE" id="PS00359">
    <property type="entry name" value="RIBOSOMAL_L11"/>
    <property type="match status" value="1"/>
</dbReference>
<comment type="function">
    <text evidence="1">Forms part of the ribosomal stalk which helps the ribosome interact with GTP-bound translation factors.</text>
</comment>
<comment type="subunit">
    <text evidence="1">Part of the ribosomal stalk of the 50S ribosomal subunit. Interacts with L10 and the large rRNA to form the base of the stalk. L10 forms an elongated spine to which L12 dimers bind in a sequential fashion forming a multimeric L10(L12)X complex.</text>
</comment>
<comment type="PTM">
    <text evidence="1">One or more lysine residues are methylated.</text>
</comment>
<comment type="similarity">
    <text evidence="1">Belongs to the universal ribosomal protein uL11 family.</text>
</comment>
<accession>A7HLB7</accession>